<protein>
    <recommendedName>
        <fullName evidence="1">Methionyl-tRNA formyltransferase</fullName>
        <ecNumber evidence="1">2.1.2.9</ecNumber>
    </recommendedName>
</protein>
<sequence length="311" mass="33976">MTKLIFMGTPDFSATVLKGLLTDDRYEILAVVTQPDRAVGRKKVIQETPVKQAAKEAGLSIYQPEKLSGSPEMEDLMKLGADGIVTAAFGQFLPSKLLDSMDFAVNVHASLLPRHRGGAPIHYALIQGDEEAGVTIMEMVKEMDAGDMISRRSIPITDEDNVGTLFEKLALVGRDLLLDTLPAYIAGDIKPEPQDTSQVTFSPNIKSEEEKLNWNKTNRQLFNQIRGMNPWPVAHTFLKGDRFKIYEALPVEGQGNPGEILSIGKKELIVATAEGALSLKQVQPAGKPKMDIASFLNGVGRTLTVGERFGD</sequence>
<gene>
    <name evidence="1" type="primary">fmt</name>
    <name type="ordered locus">SPD_1545</name>
</gene>
<reference key="1">
    <citation type="journal article" date="2007" name="J. Bacteriol.">
        <title>Genome sequence of Avery's virulent serotype 2 strain D39 of Streptococcus pneumoniae and comparison with that of unencapsulated laboratory strain R6.</title>
        <authorList>
            <person name="Lanie J.A."/>
            <person name="Ng W.-L."/>
            <person name="Kazmierczak K.M."/>
            <person name="Andrzejewski T.M."/>
            <person name="Davidsen T.M."/>
            <person name="Wayne K.J."/>
            <person name="Tettelin H."/>
            <person name="Glass J.I."/>
            <person name="Winkler M.E."/>
        </authorList>
    </citation>
    <scope>NUCLEOTIDE SEQUENCE [LARGE SCALE GENOMIC DNA]</scope>
    <source>
        <strain>D39 / NCTC 7466</strain>
    </source>
</reference>
<comment type="function">
    <text evidence="1">Attaches a formyl group to the free amino group of methionyl-tRNA(fMet). The formyl group appears to play a dual role in the initiator identity of N-formylmethionyl-tRNA by promoting its recognition by IF2 and preventing the misappropriation of this tRNA by the elongation apparatus.</text>
</comment>
<comment type="catalytic activity">
    <reaction evidence="1">
        <text>L-methionyl-tRNA(fMet) + (6R)-10-formyltetrahydrofolate = N-formyl-L-methionyl-tRNA(fMet) + (6S)-5,6,7,8-tetrahydrofolate + H(+)</text>
        <dbReference type="Rhea" id="RHEA:24380"/>
        <dbReference type="Rhea" id="RHEA-COMP:9952"/>
        <dbReference type="Rhea" id="RHEA-COMP:9953"/>
        <dbReference type="ChEBI" id="CHEBI:15378"/>
        <dbReference type="ChEBI" id="CHEBI:57453"/>
        <dbReference type="ChEBI" id="CHEBI:78530"/>
        <dbReference type="ChEBI" id="CHEBI:78844"/>
        <dbReference type="ChEBI" id="CHEBI:195366"/>
        <dbReference type="EC" id="2.1.2.9"/>
    </reaction>
</comment>
<comment type="similarity">
    <text evidence="1">Belongs to the Fmt family.</text>
</comment>
<dbReference type="EC" id="2.1.2.9" evidence="1"/>
<dbReference type="EMBL" id="CP000410">
    <property type="protein sequence ID" value="ABJ54065.1"/>
    <property type="molecule type" value="Genomic_DNA"/>
</dbReference>
<dbReference type="RefSeq" id="WP_000163696.1">
    <property type="nucleotide sequence ID" value="NZ_JAMLJR010000003.1"/>
</dbReference>
<dbReference type="SMR" id="Q04J40"/>
<dbReference type="PaxDb" id="373153-SPD_1545"/>
<dbReference type="KEGG" id="spd:SPD_1545"/>
<dbReference type="eggNOG" id="COG0223">
    <property type="taxonomic scope" value="Bacteria"/>
</dbReference>
<dbReference type="HOGENOM" id="CLU_033347_1_1_9"/>
<dbReference type="BioCyc" id="SPNE373153:G1G6V-1668-MONOMER"/>
<dbReference type="Proteomes" id="UP000001452">
    <property type="component" value="Chromosome"/>
</dbReference>
<dbReference type="GO" id="GO:0005829">
    <property type="term" value="C:cytosol"/>
    <property type="evidence" value="ECO:0007669"/>
    <property type="project" value="TreeGrafter"/>
</dbReference>
<dbReference type="GO" id="GO:0004479">
    <property type="term" value="F:methionyl-tRNA formyltransferase activity"/>
    <property type="evidence" value="ECO:0007669"/>
    <property type="project" value="UniProtKB-UniRule"/>
</dbReference>
<dbReference type="CDD" id="cd08646">
    <property type="entry name" value="FMT_core_Met-tRNA-FMT_N"/>
    <property type="match status" value="1"/>
</dbReference>
<dbReference type="CDD" id="cd08704">
    <property type="entry name" value="Met_tRNA_FMT_C"/>
    <property type="match status" value="1"/>
</dbReference>
<dbReference type="FunFam" id="3.10.25.10:FF:000004">
    <property type="entry name" value="Methionyl-tRNA formyltransferase"/>
    <property type="match status" value="1"/>
</dbReference>
<dbReference type="FunFam" id="3.40.50.170:FF:000004">
    <property type="entry name" value="Methionyl-tRNA formyltransferase"/>
    <property type="match status" value="1"/>
</dbReference>
<dbReference type="Gene3D" id="3.10.25.10">
    <property type="entry name" value="Formyl transferase, C-terminal domain"/>
    <property type="match status" value="1"/>
</dbReference>
<dbReference type="Gene3D" id="3.40.50.170">
    <property type="entry name" value="Formyl transferase, N-terminal domain"/>
    <property type="match status" value="1"/>
</dbReference>
<dbReference type="HAMAP" id="MF_00182">
    <property type="entry name" value="Formyl_trans"/>
    <property type="match status" value="1"/>
</dbReference>
<dbReference type="InterPro" id="IPR005794">
    <property type="entry name" value="Fmt"/>
</dbReference>
<dbReference type="InterPro" id="IPR005793">
    <property type="entry name" value="Formyl_trans_C"/>
</dbReference>
<dbReference type="InterPro" id="IPR037022">
    <property type="entry name" value="Formyl_trans_C_sf"/>
</dbReference>
<dbReference type="InterPro" id="IPR002376">
    <property type="entry name" value="Formyl_transf_N"/>
</dbReference>
<dbReference type="InterPro" id="IPR036477">
    <property type="entry name" value="Formyl_transf_N_sf"/>
</dbReference>
<dbReference type="InterPro" id="IPR011034">
    <property type="entry name" value="Formyl_transferase-like_C_sf"/>
</dbReference>
<dbReference type="InterPro" id="IPR001555">
    <property type="entry name" value="GART_AS"/>
</dbReference>
<dbReference type="InterPro" id="IPR044135">
    <property type="entry name" value="Met-tRNA-FMT_C"/>
</dbReference>
<dbReference type="InterPro" id="IPR041711">
    <property type="entry name" value="Met-tRNA-FMT_N"/>
</dbReference>
<dbReference type="NCBIfam" id="TIGR00460">
    <property type="entry name" value="fmt"/>
    <property type="match status" value="1"/>
</dbReference>
<dbReference type="PANTHER" id="PTHR11138">
    <property type="entry name" value="METHIONYL-TRNA FORMYLTRANSFERASE"/>
    <property type="match status" value="1"/>
</dbReference>
<dbReference type="PANTHER" id="PTHR11138:SF5">
    <property type="entry name" value="METHIONYL-TRNA FORMYLTRANSFERASE, MITOCHONDRIAL"/>
    <property type="match status" value="1"/>
</dbReference>
<dbReference type="Pfam" id="PF02911">
    <property type="entry name" value="Formyl_trans_C"/>
    <property type="match status" value="1"/>
</dbReference>
<dbReference type="Pfam" id="PF00551">
    <property type="entry name" value="Formyl_trans_N"/>
    <property type="match status" value="1"/>
</dbReference>
<dbReference type="SUPFAM" id="SSF50486">
    <property type="entry name" value="FMT C-terminal domain-like"/>
    <property type="match status" value="1"/>
</dbReference>
<dbReference type="SUPFAM" id="SSF53328">
    <property type="entry name" value="Formyltransferase"/>
    <property type="match status" value="1"/>
</dbReference>
<dbReference type="PROSITE" id="PS00373">
    <property type="entry name" value="GART"/>
    <property type="match status" value="1"/>
</dbReference>
<feature type="chain" id="PRO_1000020176" description="Methionyl-tRNA formyltransferase">
    <location>
        <begin position="1"/>
        <end position="311"/>
    </location>
</feature>
<feature type="binding site" evidence="1">
    <location>
        <begin position="110"/>
        <end position="113"/>
    </location>
    <ligand>
        <name>(6S)-5,6,7,8-tetrahydrofolate</name>
        <dbReference type="ChEBI" id="CHEBI:57453"/>
    </ligand>
</feature>
<keyword id="KW-0648">Protein biosynthesis</keyword>
<keyword id="KW-1185">Reference proteome</keyword>
<keyword id="KW-0808">Transferase</keyword>
<name>FMT_STRP2</name>
<organism>
    <name type="scientific">Streptococcus pneumoniae serotype 2 (strain D39 / NCTC 7466)</name>
    <dbReference type="NCBI Taxonomy" id="373153"/>
    <lineage>
        <taxon>Bacteria</taxon>
        <taxon>Bacillati</taxon>
        <taxon>Bacillota</taxon>
        <taxon>Bacilli</taxon>
        <taxon>Lactobacillales</taxon>
        <taxon>Streptococcaceae</taxon>
        <taxon>Streptococcus</taxon>
    </lineage>
</organism>
<evidence type="ECO:0000255" key="1">
    <source>
        <dbReference type="HAMAP-Rule" id="MF_00182"/>
    </source>
</evidence>
<accession>Q04J40</accession>
<proteinExistence type="inferred from homology"/>